<protein>
    <recommendedName>
        <fullName evidence="1">ATP-dependent zinc metalloprotease FtsH</fullName>
        <ecNumber evidence="1">3.4.24.-</ecNumber>
    </recommendedName>
</protein>
<accession>B8I4B9</accession>
<name>FTSH_RUMCH</name>
<feature type="chain" id="PRO_5000430152" description="ATP-dependent zinc metalloprotease FtsH">
    <location>
        <begin position="1"/>
        <end position="619"/>
    </location>
</feature>
<feature type="topological domain" description="Cytoplasmic" evidence="1">
    <location>
        <begin position="1"/>
        <end position="5"/>
    </location>
</feature>
<feature type="transmembrane region" description="Helical" evidence="1">
    <location>
        <begin position="6"/>
        <end position="26"/>
    </location>
</feature>
<feature type="topological domain" description="Extracellular" evidence="1">
    <location>
        <begin position="27"/>
        <end position="110"/>
    </location>
</feature>
<feature type="transmembrane region" description="Helical" evidence="1">
    <location>
        <begin position="111"/>
        <end position="131"/>
    </location>
</feature>
<feature type="topological domain" description="Cytoplasmic" evidence="1">
    <location>
        <begin position="132"/>
        <end position="619"/>
    </location>
</feature>
<feature type="active site" evidence="1">
    <location>
        <position position="427"/>
    </location>
</feature>
<feature type="binding site" evidence="1">
    <location>
        <begin position="204"/>
        <end position="211"/>
    </location>
    <ligand>
        <name>ATP</name>
        <dbReference type="ChEBI" id="CHEBI:30616"/>
    </ligand>
</feature>
<feature type="binding site" evidence="1">
    <location>
        <position position="426"/>
    </location>
    <ligand>
        <name>Zn(2+)</name>
        <dbReference type="ChEBI" id="CHEBI:29105"/>
        <note>catalytic</note>
    </ligand>
</feature>
<feature type="binding site" evidence="1">
    <location>
        <position position="430"/>
    </location>
    <ligand>
        <name>Zn(2+)</name>
        <dbReference type="ChEBI" id="CHEBI:29105"/>
        <note>catalytic</note>
    </ligand>
</feature>
<feature type="binding site" evidence="1">
    <location>
        <position position="502"/>
    </location>
    <ligand>
        <name>Zn(2+)</name>
        <dbReference type="ChEBI" id="CHEBI:29105"/>
        <note>catalytic</note>
    </ligand>
</feature>
<organism>
    <name type="scientific">Ruminiclostridium cellulolyticum (strain ATCC 35319 / DSM 5812 / JCM 6584 / H10)</name>
    <name type="common">Clostridium cellulolyticum</name>
    <dbReference type="NCBI Taxonomy" id="394503"/>
    <lineage>
        <taxon>Bacteria</taxon>
        <taxon>Bacillati</taxon>
        <taxon>Bacillota</taxon>
        <taxon>Clostridia</taxon>
        <taxon>Eubacteriales</taxon>
        <taxon>Oscillospiraceae</taxon>
        <taxon>Ruminiclostridium</taxon>
    </lineage>
</organism>
<evidence type="ECO:0000255" key="1">
    <source>
        <dbReference type="HAMAP-Rule" id="MF_01458"/>
    </source>
</evidence>
<proteinExistence type="inferred from homology"/>
<sequence>MKYFKGISFYIIIFILILVIITFFTATDNPPKMSYSELLTEMKAGNVKSIGLQTDTATIELKKPKENNRTKFVVIVPPDVTSASERFTAALDNKLIEDFHVTQPPQPPWWVSMLPTVGLVIILILIWFFFIQQSQGGGGGNRVMSFGKSRAKMTVDDKKKITFENVAGADEEKEELAEIVEFLKAPKKFVELGARIPKGVLLVGPPGTGKTLLAKAVSGEAGVPFFSISGSDFVEMFVGVGASRVRDLFEQAKKNAPCIVFIDEIDAVGRHRGAGLGGGHDEREQTLNQLLVEMDGFGINEGVIILAATNRPDILDPALLRPGRFDRRVVVGLPDIKGREQILKVHSRGKPLADDVRLDDLARITPGFTGADIENLLNEAALLTARANKKKIGNEEIKEAAFKVMMGPEKKSRVMSEHDKKVTAYHEAGHAIAIKLVSSSQKVDRVSIIPAGMAGGYTASRPQEDKSYHTRSQLIEEIIIALGGRAAEEITMDEVSTGASSDLKKVNQIARNMVTKYGMSEKLGNMIFGNDNDEVFIGRDLAQARNYSDELAAIIDNEVKSIIDNAYQKTVSLLRENIVRLNKLAEVLLEKEKVEGAEFEEIFENAVLEGSSQTPQLEG</sequence>
<comment type="function">
    <text evidence="1">Acts as a processive, ATP-dependent zinc metallopeptidase for both cytoplasmic and membrane proteins. Plays a role in the quality control of integral membrane proteins.</text>
</comment>
<comment type="cofactor">
    <cofactor evidence="1">
        <name>Zn(2+)</name>
        <dbReference type="ChEBI" id="CHEBI:29105"/>
    </cofactor>
    <text evidence="1">Binds 1 zinc ion per subunit.</text>
</comment>
<comment type="subunit">
    <text evidence="1">Homohexamer.</text>
</comment>
<comment type="subcellular location">
    <subcellularLocation>
        <location evidence="1">Cell membrane</location>
        <topology evidence="1">Multi-pass membrane protein</topology>
        <orientation evidence="1">Cytoplasmic side</orientation>
    </subcellularLocation>
</comment>
<comment type="similarity">
    <text evidence="1">In the central section; belongs to the AAA ATPase family.</text>
</comment>
<comment type="similarity">
    <text evidence="1">In the C-terminal section; belongs to the peptidase M41 family.</text>
</comment>
<dbReference type="EC" id="3.4.24.-" evidence="1"/>
<dbReference type="EMBL" id="CP001348">
    <property type="protein sequence ID" value="ACL74473.1"/>
    <property type="molecule type" value="Genomic_DNA"/>
</dbReference>
<dbReference type="RefSeq" id="WP_012634539.1">
    <property type="nucleotide sequence ID" value="NC_011898.1"/>
</dbReference>
<dbReference type="SMR" id="B8I4B9"/>
<dbReference type="STRING" id="394503.Ccel_0085"/>
<dbReference type="KEGG" id="cce:Ccel_0085"/>
<dbReference type="eggNOG" id="COG0465">
    <property type="taxonomic scope" value="Bacteria"/>
</dbReference>
<dbReference type="HOGENOM" id="CLU_000688_16_2_9"/>
<dbReference type="OrthoDB" id="9809379at2"/>
<dbReference type="Proteomes" id="UP000001349">
    <property type="component" value="Chromosome"/>
</dbReference>
<dbReference type="GO" id="GO:0005886">
    <property type="term" value="C:plasma membrane"/>
    <property type="evidence" value="ECO:0007669"/>
    <property type="project" value="UniProtKB-SubCell"/>
</dbReference>
<dbReference type="GO" id="GO:0005524">
    <property type="term" value="F:ATP binding"/>
    <property type="evidence" value="ECO:0007669"/>
    <property type="project" value="UniProtKB-UniRule"/>
</dbReference>
<dbReference type="GO" id="GO:0016887">
    <property type="term" value="F:ATP hydrolysis activity"/>
    <property type="evidence" value="ECO:0007669"/>
    <property type="project" value="UniProtKB-UniRule"/>
</dbReference>
<dbReference type="GO" id="GO:0004176">
    <property type="term" value="F:ATP-dependent peptidase activity"/>
    <property type="evidence" value="ECO:0007669"/>
    <property type="project" value="InterPro"/>
</dbReference>
<dbReference type="GO" id="GO:0004222">
    <property type="term" value="F:metalloendopeptidase activity"/>
    <property type="evidence" value="ECO:0007669"/>
    <property type="project" value="InterPro"/>
</dbReference>
<dbReference type="GO" id="GO:0008270">
    <property type="term" value="F:zinc ion binding"/>
    <property type="evidence" value="ECO:0007669"/>
    <property type="project" value="UniProtKB-UniRule"/>
</dbReference>
<dbReference type="GO" id="GO:0030163">
    <property type="term" value="P:protein catabolic process"/>
    <property type="evidence" value="ECO:0007669"/>
    <property type="project" value="UniProtKB-UniRule"/>
</dbReference>
<dbReference type="GO" id="GO:0006508">
    <property type="term" value="P:proteolysis"/>
    <property type="evidence" value="ECO:0007669"/>
    <property type="project" value="UniProtKB-KW"/>
</dbReference>
<dbReference type="CDD" id="cd19501">
    <property type="entry name" value="RecA-like_FtsH"/>
    <property type="match status" value="1"/>
</dbReference>
<dbReference type="FunFam" id="1.10.8.60:FF:000001">
    <property type="entry name" value="ATP-dependent zinc metalloprotease FtsH"/>
    <property type="match status" value="1"/>
</dbReference>
<dbReference type="FunFam" id="1.20.58.760:FF:000001">
    <property type="entry name" value="ATP-dependent zinc metalloprotease FtsH"/>
    <property type="match status" value="1"/>
</dbReference>
<dbReference type="FunFam" id="3.40.50.300:FF:000001">
    <property type="entry name" value="ATP-dependent zinc metalloprotease FtsH"/>
    <property type="match status" value="1"/>
</dbReference>
<dbReference type="Gene3D" id="1.10.8.60">
    <property type="match status" value="1"/>
</dbReference>
<dbReference type="Gene3D" id="3.40.50.300">
    <property type="entry name" value="P-loop containing nucleotide triphosphate hydrolases"/>
    <property type="match status" value="1"/>
</dbReference>
<dbReference type="Gene3D" id="1.20.58.760">
    <property type="entry name" value="Peptidase M41"/>
    <property type="match status" value="1"/>
</dbReference>
<dbReference type="HAMAP" id="MF_01458">
    <property type="entry name" value="FtsH"/>
    <property type="match status" value="1"/>
</dbReference>
<dbReference type="InterPro" id="IPR003593">
    <property type="entry name" value="AAA+_ATPase"/>
</dbReference>
<dbReference type="InterPro" id="IPR041569">
    <property type="entry name" value="AAA_lid_3"/>
</dbReference>
<dbReference type="InterPro" id="IPR003959">
    <property type="entry name" value="ATPase_AAA_core"/>
</dbReference>
<dbReference type="InterPro" id="IPR003960">
    <property type="entry name" value="ATPase_AAA_CS"/>
</dbReference>
<dbReference type="InterPro" id="IPR005936">
    <property type="entry name" value="FtsH"/>
</dbReference>
<dbReference type="InterPro" id="IPR027417">
    <property type="entry name" value="P-loop_NTPase"/>
</dbReference>
<dbReference type="InterPro" id="IPR011546">
    <property type="entry name" value="Pept_M41_FtsH_extracell"/>
</dbReference>
<dbReference type="InterPro" id="IPR000642">
    <property type="entry name" value="Peptidase_M41"/>
</dbReference>
<dbReference type="InterPro" id="IPR037219">
    <property type="entry name" value="Peptidase_M41-like"/>
</dbReference>
<dbReference type="NCBIfam" id="TIGR01241">
    <property type="entry name" value="FtsH_fam"/>
    <property type="match status" value="1"/>
</dbReference>
<dbReference type="PANTHER" id="PTHR23076:SF113">
    <property type="entry name" value="ATP-DEPENDENT ZINC METALLOPROTEASE FTSH 1, CHLOROPLASTIC-RELATED"/>
    <property type="match status" value="1"/>
</dbReference>
<dbReference type="PANTHER" id="PTHR23076">
    <property type="entry name" value="METALLOPROTEASE M41 FTSH"/>
    <property type="match status" value="1"/>
</dbReference>
<dbReference type="Pfam" id="PF00004">
    <property type="entry name" value="AAA"/>
    <property type="match status" value="1"/>
</dbReference>
<dbReference type="Pfam" id="PF17862">
    <property type="entry name" value="AAA_lid_3"/>
    <property type="match status" value="1"/>
</dbReference>
<dbReference type="Pfam" id="PF06480">
    <property type="entry name" value="FtsH_ext"/>
    <property type="match status" value="1"/>
</dbReference>
<dbReference type="Pfam" id="PF01434">
    <property type="entry name" value="Peptidase_M41"/>
    <property type="match status" value="1"/>
</dbReference>
<dbReference type="SMART" id="SM00382">
    <property type="entry name" value="AAA"/>
    <property type="match status" value="1"/>
</dbReference>
<dbReference type="SUPFAM" id="SSF140990">
    <property type="entry name" value="FtsH protease domain-like"/>
    <property type="match status" value="1"/>
</dbReference>
<dbReference type="SUPFAM" id="SSF52540">
    <property type="entry name" value="P-loop containing nucleoside triphosphate hydrolases"/>
    <property type="match status" value="1"/>
</dbReference>
<dbReference type="PROSITE" id="PS00674">
    <property type="entry name" value="AAA"/>
    <property type="match status" value="1"/>
</dbReference>
<gene>
    <name evidence="1" type="primary">ftsH</name>
    <name type="ordered locus">Ccel_0085</name>
</gene>
<keyword id="KW-0067">ATP-binding</keyword>
<keyword id="KW-1003">Cell membrane</keyword>
<keyword id="KW-0378">Hydrolase</keyword>
<keyword id="KW-0472">Membrane</keyword>
<keyword id="KW-0479">Metal-binding</keyword>
<keyword id="KW-0482">Metalloprotease</keyword>
<keyword id="KW-0547">Nucleotide-binding</keyword>
<keyword id="KW-0645">Protease</keyword>
<keyword id="KW-1185">Reference proteome</keyword>
<keyword id="KW-0812">Transmembrane</keyword>
<keyword id="KW-1133">Transmembrane helix</keyword>
<keyword id="KW-0862">Zinc</keyword>
<reference key="1">
    <citation type="submission" date="2009-01" db="EMBL/GenBank/DDBJ databases">
        <title>Complete sequence of Clostridium cellulolyticum H10.</title>
        <authorList>
            <consortium name="US DOE Joint Genome Institute"/>
            <person name="Lucas S."/>
            <person name="Copeland A."/>
            <person name="Lapidus A."/>
            <person name="Glavina del Rio T."/>
            <person name="Dalin E."/>
            <person name="Tice H."/>
            <person name="Bruce D."/>
            <person name="Goodwin L."/>
            <person name="Pitluck S."/>
            <person name="Chertkov O."/>
            <person name="Saunders E."/>
            <person name="Brettin T."/>
            <person name="Detter J.C."/>
            <person name="Han C."/>
            <person name="Larimer F."/>
            <person name="Land M."/>
            <person name="Hauser L."/>
            <person name="Kyrpides N."/>
            <person name="Ivanova N."/>
            <person name="Zhou J."/>
            <person name="Richardson P."/>
        </authorList>
    </citation>
    <scope>NUCLEOTIDE SEQUENCE [LARGE SCALE GENOMIC DNA]</scope>
    <source>
        <strain>ATCC 35319 / DSM 5812 / JCM 6584 / H10</strain>
    </source>
</reference>